<keyword id="KW-1185">Reference proteome</keyword>
<proteinExistence type="predicted"/>
<organism>
    <name type="scientific">Schizosaccharomyces pombe (strain 972 / ATCC 24843)</name>
    <name type="common">Fission yeast</name>
    <dbReference type="NCBI Taxonomy" id="284812"/>
    <lineage>
        <taxon>Eukaryota</taxon>
        <taxon>Fungi</taxon>
        <taxon>Dikarya</taxon>
        <taxon>Ascomycota</taxon>
        <taxon>Taphrinomycotina</taxon>
        <taxon>Schizosaccharomycetes</taxon>
        <taxon>Schizosaccharomycetales</taxon>
        <taxon>Schizosaccharomycetaceae</taxon>
        <taxon>Schizosaccharomyces</taxon>
    </lineage>
</organism>
<accession>Q6MX60</accession>
<reference key="1">
    <citation type="journal article" date="2002" name="Nature">
        <title>The genome sequence of Schizosaccharomyces pombe.</title>
        <authorList>
            <person name="Wood V."/>
            <person name="Gwilliam R."/>
            <person name="Rajandream M.A."/>
            <person name="Lyne M.H."/>
            <person name="Lyne R."/>
            <person name="Stewart A."/>
            <person name="Sgouros J.G."/>
            <person name="Peat N."/>
            <person name="Hayles J."/>
            <person name="Baker S.G."/>
            <person name="Basham D."/>
            <person name="Bowman S."/>
            <person name="Brooks K."/>
            <person name="Brown D."/>
            <person name="Brown S."/>
            <person name="Chillingworth T."/>
            <person name="Churcher C.M."/>
            <person name="Collins M."/>
            <person name="Connor R."/>
            <person name="Cronin A."/>
            <person name="Davis P."/>
            <person name="Feltwell T."/>
            <person name="Fraser A."/>
            <person name="Gentles S."/>
            <person name="Goble A."/>
            <person name="Hamlin N."/>
            <person name="Harris D.E."/>
            <person name="Hidalgo J."/>
            <person name="Hodgson G."/>
            <person name="Holroyd S."/>
            <person name="Hornsby T."/>
            <person name="Howarth S."/>
            <person name="Huckle E.J."/>
            <person name="Hunt S."/>
            <person name="Jagels K."/>
            <person name="James K.D."/>
            <person name="Jones L."/>
            <person name="Jones M."/>
            <person name="Leather S."/>
            <person name="McDonald S."/>
            <person name="McLean J."/>
            <person name="Mooney P."/>
            <person name="Moule S."/>
            <person name="Mungall K.L."/>
            <person name="Murphy L.D."/>
            <person name="Niblett D."/>
            <person name="Odell C."/>
            <person name="Oliver K."/>
            <person name="O'Neil S."/>
            <person name="Pearson D."/>
            <person name="Quail M.A."/>
            <person name="Rabbinowitsch E."/>
            <person name="Rutherford K.M."/>
            <person name="Rutter S."/>
            <person name="Saunders D."/>
            <person name="Seeger K."/>
            <person name="Sharp S."/>
            <person name="Skelton J."/>
            <person name="Simmonds M.N."/>
            <person name="Squares R."/>
            <person name="Squares S."/>
            <person name="Stevens K."/>
            <person name="Taylor K."/>
            <person name="Taylor R.G."/>
            <person name="Tivey A."/>
            <person name="Walsh S.V."/>
            <person name="Warren T."/>
            <person name="Whitehead S."/>
            <person name="Woodward J.R."/>
            <person name="Volckaert G."/>
            <person name="Aert R."/>
            <person name="Robben J."/>
            <person name="Grymonprez B."/>
            <person name="Weltjens I."/>
            <person name="Vanstreels E."/>
            <person name="Rieger M."/>
            <person name="Schaefer M."/>
            <person name="Mueller-Auer S."/>
            <person name="Gabel C."/>
            <person name="Fuchs M."/>
            <person name="Duesterhoeft A."/>
            <person name="Fritzc C."/>
            <person name="Holzer E."/>
            <person name="Moestl D."/>
            <person name="Hilbert H."/>
            <person name="Borzym K."/>
            <person name="Langer I."/>
            <person name="Beck A."/>
            <person name="Lehrach H."/>
            <person name="Reinhardt R."/>
            <person name="Pohl T.M."/>
            <person name="Eger P."/>
            <person name="Zimmermann W."/>
            <person name="Wedler H."/>
            <person name="Wambutt R."/>
            <person name="Purnelle B."/>
            <person name="Goffeau A."/>
            <person name="Cadieu E."/>
            <person name="Dreano S."/>
            <person name="Gloux S."/>
            <person name="Lelaure V."/>
            <person name="Mottier S."/>
            <person name="Galibert F."/>
            <person name="Aves S.J."/>
            <person name="Xiang Z."/>
            <person name="Hunt C."/>
            <person name="Moore K."/>
            <person name="Hurst S.M."/>
            <person name="Lucas M."/>
            <person name="Rochet M."/>
            <person name="Gaillardin C."/>
            <person name="Tallada V.A."/>
            <person name="Garzon A."/>
            <person name="Thode G."/>
            <person name="Daga R.R."/>
            <person name="Cruzado L."/>
            <person name="Jimenez J."/>
            <person name="Sanchez M."/>
            <person name="del Rey F."/>
            <person name="Benito J."/>
            <person name="Dominguez A."/>
            <person name="Revuelta J.L."/>
            <person name="Moreno S."/>
            <person name="Armstrong J."/>
            <person name="Forsburg S.L."/>
            <person name="Cerutti L."/>
            <person name="Lowe T."/>
            <person name="McCombie W.R."/>
            <person name="Paulsen I."/>
            <person name="Potashkin J."/>
            <person name="Shpakovski G.V."/>
            <person name="Ussery D."/>
            <person name="Barrell B.G."/>
            <person name="Nurse P."/>
        </authorList>
    </citation>
    <scope>NUCLEOTIDE SEQUENCE [LARGE SCALE GENOMIC DNA]</scope>
    <source>
        <strain>972 / ATCC 24843</strain>
    </source>
</reference>
<gene>
    <name type="ORF">SPBCPT2R1.02</name>
</gene>
<feature type="chain" id="PRO_0000304797" description="Uncharacterized protein CPT2R1.02">
    <location>
        <begin position="1"/>
        <end position="119"/>
    </location>
</feature>
<sequence length="119" mass="13068">MTALMNHIYIDNPLISNSTNNVTHELLIDLHELYNDGEISRIVLLRTLVTQSADDATWIINLTDDVLNGLPLLKKRDRYTTQCHSTNMASTYDCDTGANAVGARGGATLAADYRGDWGG</sequence>
<dbReference type="EMBL" id="BX784043">
    <property type="protein sequence ID" value="CAE54417.1"/>
    <property type="molecule type" value="Genomic_DNA"/>
</dbReference>
<dbReference type="EMBL" id="CU329671">
    <property type="protein sequence ID" value="CAO77671.1"/>
    <property type="molecule type" value="Genomic_DNA"/>
</dbReference>
<dbReference type="RefSeq" id="XP_001713155.1">
    <property type="nucleotide sequence ID" value="XM_001713103.1"/>
</dbReference>
<dbReference type="STRING" id="284812.Q6MX60"/>
<dbReference type="EnsemblFungi" id="SPBCPT2R1.02.1">
    <property type="protein sequence ID" value="SPBCPT2R1.02.1:pep"/>
    <property type="gene ID" value="SPBCPT2R1.02"/>
</dbReference>
<dbReference type="PomBase" id="SPBCPT2R1.02"/>
<dbReference type="VEuPathDB" id="FungiDB:SPBCPT2R1.02"/>
<dbReference type="HOGENOM" id="CLU_2062827_0_0_1"/>
<dbReference type="InParanoid" id="Q6MX60"/>
<dbReference type="PRO" id="PR:Q6MX60"/>
<dbReference type="Proteomes" id="UP000002485">
    <property type="component" value="Chromosome II"/>
</dbReference>
<name>YP42_SCHPO</name>
<protein>
    <recommendedName>
        <fullName>Uncharacterized protein CPT2R1.02</fullName>
    </recommendedName>
</protein>